<name>UP1_URTPI</name>
<sequence>DENENLYGPNENKAKAKDLTAGASYLTKEAGCTKLQAGCTMYQAYN</sequence>
<accession>P0C1G1</accession>
<comment type="function">
    <text evidence="2 3">This toxin is a potent hemolysin devoid of enzymatic activity. Its hemolytic activity is inhibited by sphingomyelin but not by cholesterol. In erythrocyte membranes, it causes numerous cell membrane ruptures. It also exerces cytotoxicity to different cell lines. It exerces a positive inotropic effect. Also causes hemorrhage and necrosis by dilation of the blood vessels in the skin, and vascular leakage of fluids and rupture of alveolar walls of the lungs. Is a potent ichtyotoxin. May act as a pore-forming toxin.</text>
</comment>
<comment type="subcellular location">
    <subcellularLocation>
        <location>Secreted</location>
    </subcellularLocation>
    <subcellularLocation>
        <location>Nematocyst</location>
    </subcellularLocation>
    <subcellularLocation>
        <location evidence="1">Target cell membrane</location>
    </subcellularLocation>
    <text evidence="1">Forms a membrane channel in the prey.</text>
</comment>
<feature type="chain" id="PRO_0000239810" description="Toxin Up-1">
    <location>
        <begin position="1"/>
        <end position="46" status="greater than"/>
    </location>
</feature>
<feature type="non-terminal residue">
    <location>
        <position position="46"/>
    </location>
</feature>
<dbReference type="GO" id="GO:0005576">
    <property type="term" value="C:extracellular region"/>
    <property type="evidence" value="ECO:0007669"/>
    <property type="project" value="UniProtKB-SubCell"/>
</dbReference>
<dbReference type="GO" id="GO:0016020">
    <property type="term" value="C:membrane"/>
    <property type="evidence" value="ECO:0007669"/>
    <property type="project" value="UniProtKB-KW"/>
</dbReference>
<dbReference type="GO" id="GO:0042151">
    <property type="term" value="C:nematocyst"/>
    <property type="evidence" value="ECO:0007669"/>
    <property type="project" value="UniProtKB-SubCell"/>
</dbReference>
<dbReference type="GO" id="GO:0044218">
    <property type="term" value="C:other organism cell membrane"/>
    <property type="evidence" value="ECO:0007669"/>
    <property type="project" value="UniProtKB-KW"/>
</dbReference>
<dbReference type="GO" id="GO:0090729">
    <property type="term" value="F:toxin activity"/>
    <property type="evidence" value="ECO:0007669"/>
    <property type="project" value="UniProtKB-KW"/>
</dbReference>
<dbReference type="GO" id="GO:0031640">
    <property type="term" value="P:killing of cells of another organism"/>
    <property type="evidence" value="ECO:0007669"/>
    <property type="project" value="UniProtKB-KW"/>
</dbReference>
<dbReference type="GO" id="GO:0006811">
    <property type="term" value="P:monoatomic ion transport"/>
    <property type="evidence" value="ECO:0007669"/>
    <property type="project" value="UniProtKB-KW"/>
</dbReference>
<organism>
    <name type="scientific">Urticina piscivora</name>
    <name type="common">Fish-eating sea anemone</name>
    <dbReference type="NCBI Taxonomy" id="386596"/>
    <lineage>
        <taxon>Eukaryota</taxon>
        <taxon>Metazoa</taxon>
        <taxon>Cnidaria</taxon>
        <taxon>Anthozoa</taxon>
        <taxon>Hexacorallia</taxon>
        <taxon>Actiniaria</taxon>
        <taxon>Actiniidae</taxon>
        <taxon>Urticina</taxon>
    </lineage>
</organism>
<reference key="1">
    <citation type="journal article" date="1995" name="Pharmacol. Res.">
        <title>Toxic effects of the novel protein UpI from the sea anemone Urticina piscivora.</title>
        <authorList>
            <person name="Cline E.I."/>
            <person name="Wiebe L.I."/>
            <person name="Young J.D."/>
            <person name="Samuel J."/>
        </authorList>
    </citation>
    <scope>PROTEIN SEQUENCE</scope>
    <scope>FUNCTION</scope>
</reference>
<reference key="2">
    <citation type="journal article" date="1997" name="Phytother. Res.">
        <title>UpI: in vivo studies involving the potent cardiac stimulant and haemolysin from the sea anemone Urticina piscivora.</title>
        <authorList>
            <person name="Cline E.I."/>
        </authorList>
    </citation>
    <scope>FUNCTION</scope>
    <scope>BIOASSAY</scope>
</reference>
<proteinExistence type="evidence at protein level"/>
<evidence type="ECO:0000250" key="1"/>
<evidence type="ECO:0000269" key="2">
    <source>
    </source>
</evidence>
<evidence type="ECO:0000269" key="3">
    <source ref="2"/>
</evidence>
<evidence type="ECO:0000303" key="4">
    <source>
    </source>
</evidence>
<protein>
    <recommendedName>
        <fullName>Toxin Up-1</fullName>
        <shortName evidence="4">UpI</shortName>
    </recommendedName>
</protein>
<keyword id="KW-0204">Cytolysis</keyword>
<keyword id="KW-0903">Direct protein sequencing</keyword>
<keyword id="KW-0354">Hemolysis</keyword>
<keyword id="KW-0406">Ion transport</keyword>
<keyword id="KW-0472">Membrane</keyword>
<keyword id="KW-0166">Nematocyst</keyword>
<keyword id="KW-0964">Secreted</keyword>
<keyword id="KW-1052">Target cell membrane</keyword>
<keyword id="KW-1053">Target membrane</keyword>
<keyword id="KW-0800">Toxin</keyword>
<keyword id="KW-0812">Transmembrane</keyword>
<keyword id="KW-0813">Transport</keyword>